<name>CSN_ASPFM</name>
<evidence type="ECO:0000255" key="1"/>
<evidence type="ECO:0000269" key="2">
    <source>
    </source>
</evidence>
<evidence type="ECO:0000269" key="3">
    <source>
    </source>
</evidence>
<evidence type="ECO:0000269" key="4">
    <source>
    </source>
</evidence>
<evidence type="ECO:0000269" key="5">
    <source>
    </source>
</evidence>
<evidence type="ECO:0000269" key="6">
    <source>
    </source>
</evidence>
<evidence type="ECO:0000305" key="7"/>
<accession>Q875I9</accession>
<accession>Q709P2</accession>
<accession>Q9Y760</accession>
<organism>
    <name type="scientific">Aspergillus fumigatus</name>
    <name type="common">Neosartorya fumigata</name>
    <dbReference type="NCBI Taxonomy" id="746128"/>
    <lineage>
        <taxon>Eukaryota</taxon>
        <taxon>Fungi</taxon>
        <taxon>Dikarya</taxon>
        <taxon>Ascomycota</taxon>
        <taxon>Pezizomycotina</taxon>
        <taxon>Eurotiomycetes</taxon>
        <taxon>Eurotiomycetidae</taxon>
        <taxon>Eurotiales</taxon>
        <taxon>Aspergillaceae</taxon>
        <taxon>Aspergillus</taxon>
        <taxon>Aspergillus subgen. Fumigati</taxon>
    </lineage>
</organism>
<comment type="function">
    <text evidence="3 5 6">Chitosanase catalyzing the endo-type cleavage of chitosan, the deacylated form of chitin. Chitosanase may be crucial in the degradation of the deacetylated portion of chitin in the fungal cell wall. Chitoolisaccharides produced by the hydrolysis of partially N-acetylated chitosan are known to have many biological activities, including antibacterial activity, immune-enhancing effects, and elicitor activity. The chitosans with higher degrees of deacetylation were shown to be the better substrates. Chitodimer, chitotrimer, and chitotetramer are the major products but monoacetyl chitodimer, monoacetyl chitotrimer, and monoacetyl chitotetramer are also produced.</text>
</comment>
<comment type="catalytic activity">
    <reaction evidence="2 3 6">
        <text>Endohydrolysis of beta-(1-&gt;4)-linkages between D-glucosamine residues in a partly acetylated chitosan.</text>
        <dbReference type="EC" id="3.2.1.132"/>
    </reaction>
</comment>
<comment type="biophysicochemical properties">
    <phDependence>
        <text evidence="2 6">Optimum pH is 6.5.</text>
    </phDependence>
    <temperatureDependence>
        <text evidence="2 6">Optimum temperature is between 65 and 70 degrees Celsius.</text>
    </temperatureDependence>
</comment>
<comment type="subcellular location">
    <subcellularLocation>
        <location evidence="4 5">Secreted</location>
    </subcellularLocation>
</comment>
<comment type="induction">
    <text evidence="4">Expressed during human infection.</text>
</comment>
<comment type="allergen">
    <text>Causes an allergic reaction in human. Binds to IgE.</text>
</comment>
<comment type="similarity">
    <text evidence="7">Belongs to the glycosyl hydrolase 75 family.</text>
</comment>
<proteinExistence type="evidence at protein level"/>
<protein>
    <recommendedName>
        <fullName>Endo-chitosanase</fullName>
        <ecNumber>3.2.1.132</ecNumber>
    </recommendedName>
</protein>
<keyword id="KW-0020">Allergen</keyword>
<keyword id="KW-0119">Carbohydrate metabolism</keyword>
<keyword id="KW-0903">Direct protein sequencing</keyword>
<keyword id="KW-0325">Glycoprotein</keyword>
<keyword id="KW-0326">Glycosidase</keyword>
<keyword id="KW-0378">Hydrolase</keyword>
<keyword id="KW-0624">Polysaccharide degradation</keyword>
<keyword id="KW-0964">Secreted</keyword>
<keyword id="KW-0732">Signal</keyword>
<dbReference type="EC" id="3.2.1.132"/>
<dbReference type="EMBL" id="AY190324">
    <property type="protein sequence ID" value="AAO41660.1"/>
    <property type="molecule type" value="Genomic_DNA"/>
</dbReference>
<dbReference type="EMBL" id="AJ607393">
    <property type="protein sequence ID" value="CAE54966.1"/>
    <property type="molecule type" value="mRNA"/>
</dbReference>
<dbReference type="EMBL" id="AF105078">
    <property type="protein sequence ID" value="AAD26111.1"/>
    <property type="molecule type" value="mRNA"/>
</dbReference>
<dbReference type="SMR" id="Q875I9"/>
<dbReference type="Allergome" id="8985">
    <property type="allergen name" value="Asp f Chitosanase"/>
</dbReference>
<dbReference type="CAZy" id="GH75">
    <property type="family name" value="Glycoside Hydrolase Family 75"/>
</dbReference>
<dbReference type="GlyCosmos" id="Q875I9">
    <property type="glycosylation" value="1 site, No reported glycans"/>
</dbReference>
<dbReference type="OMA" id="GATAKWK"/>
<dbReference type="BRENDA" id="3.2.1.132">
    <property type="organism ID" value="508"/>
</dbReference>
<dbReference type="GO" id="GO:0005576">
    <property type="term" value="C:extracellular region"/>
    <property type="evidence" value="ECO:0007669"/>
    <property type="project" value="UniProtKB-SubCell"/>
</dbReference>
<dbReference type="GO" id="GO:0016977">
    <property type="term" value="F:chitosanase activity"/>
    <property type="evidence" value="ECO:0000314"/>
    <property type="project" value="AspGD"/>
</dbReference>
<dbReference type="GO" id="GO:0000272">
    <property type="term" value="P:polysaccharide catabolic process"/>
    <property type="evidence" value="ECO:0007669"/>
    <property type="project" value="UniProtKB-KW"/>
</dbReference>
<dbReference type="InterPro" id="IPR009939">
    <property type="entry name" value="Chitosanase_fungal"/>
</dbReference>
<dbReference type="PANTHER" id="PTHR42061">
    <property type="entry name" value="ENDO-CHITOSANASE"/>
    <property type="match status" value="1"/>
</dbReference>
<dbReference type="PANTHER" id="PTHR42061:SF9">
    <property type="entry name" value="ENDO-CHITOSANASE"/>
    <property type="match status" value="1"/>
</dbReference>
<dbReference type="Pfam" id="PF07335">
    <property type="entry name" value="Glyco_hydro_75"/>
    <property type="match status" value="1"/>
</dbReference>
<gene>
    <name type="primary">csn</name>
</gene>
<reference key="1">
    <citation type="journal article" date="2000" name="Biotechnol. Appl. Biochem.">
        <title>An Aspergillus chitosanase with potential for large-scale preparation of chitosan oligosaccharides.</title>
        <authorList>
            <person name="Cheng C.Y."/>
            <person name="Li Y.K."/>
        </authorList>
    </citation>
    <scope>NUCLEOTIDE SEQUENCE [GENOMIC DNA]</scope>
    <scope>PROTEIN SEQUENCE OF 18-32</scope>
    <scope>CATALYTIC ACTIVITY</scope>
    <scope>BIOPHYSICOCHEMICAL PROPERTIES</scope>
    <source>
        <strain>Y2K</strain>
    </source>
</reference>
<reference key="2">
    <citation type="journal article" date="2005" name="Med. Mycol.">
        <title>Analysis of the major proteins secreted by the human opportunistic pathogen Aspergillus fumigatus under in vitro conditions.</title>
        <authorList>
            <person name="Schwienbacher M."/>
            <person name="Weig M."/>
            <person name="Thies S."/>
            <person name="Regula J.T."/>
            <person name="Heesemann J."/>
            <person name="Ebel F."/>
        </authorList>
    </citation>
    <scope>NUCLEOTIDE SEQUENCE [MRNA]</scope>
    <scope>PROTEIN SEQUENCE OF 18-32</scope>
    <scope>VARIANTS ILE-38 AND ARG-213</scope>
    <scope>SUBCELLULAR LOCATION</scope>
    <scope>INDUCTION</scope>
    <source>
        <strain>NCPF7367</strain>
    </source>
</reference>
<reference key="3">
    <citation type="submission" date="1998-11" db="EMBL/GenBank/DDBJ databases">
        <title>The partial sequence of chitosanase cDNA from Aspergillus fumigatus using PCR.</title>
        <authorList>
            <person name="Kang T.H."/>
            <person name="Chung J.Y."/>
            <person name="Chung K.C."/>
        </authorList>
    </citation>
    <scope>NUCLEOTIDE SEQUENCE [MRNA]</scope>
</reference>
<reference key="4">
    <citation type="journal article" date="2007" name="Clin. Exp. Allergy">
        <title>Identification of novel allergens of Aspergillus fumigatus using immunoproteomics approach.</title>
        <authorList>
            <person name="Gautam P."/>
            <person name="Sundaram C.S."/>
            <person name="Madan T."/>
            <person name="Gade W.N."/>
            <person name="Shah A."/>
            <person name="Sirdeshmukh R."/>
            <person name="Sarma P.U."/>
        </authorList>
    </citation>
    <scope>PROTEIN SEQUENCE OF 55-70; 73-87; 90-102 AND 119-131</scope>
    <scope>SUBCELLULAR LOCATION</scope>
    <scope>FUNCTION AS AN ALLERGEN</scope>
</reference>
<reference key="5">
    <citation type="journal article" date="2006" name="J. Biol. Chem.">
        <title>Exploration of glycosyl hydrolase family 75, a chitosanase from Aspergillus fumigatus.</title>
        <authorList>
            <person name="Cheng C.Y."/>
            <person name="Chang C.H."/>
            <person name="Wu Y.J."/>
            <person name="Li Y.K."/>
        </authorList>
    </citation>
    <scope>FUNCTION</scope>
    <scope>CATALYTIC ACTIVITY</scope>
    <scope>MUTAGENESIS OF ASP-160 AND GLU-169</scope>
    <source>
        <strain>Y2K</strain>
    </source>
</reference>
<reference key="6">
    <citation type="journal article" date="2012" name="Biotechnol. Lett.">
        <title>High-level expression and characterization of a highly thermostable chitosanase from Aspergillus fumigatus in Pichia pastoris.</title>
        <authorList>
            <person name="Chen X."/>
            <person name="Zhai C."/>
            <person name="Kang L."/>
            <person name="Li C."/>
            <person name="Yan H."/>
            <person name="Zhou Y."/>
            <person name="Yu X."/>
            <person name="Ma L."/>
        </authorList>
    </citation>
    <scope>FUNCTION</scope>
    <scope>CATALYTIC ACTIVITY</scope>
    <scope>BIOPHYSICOCHEMICAL PROPERTIES</scope>
    <source>
        <strain>Y2K</strain>
    </source>
</reference>
<sequence>MRLSEILTVALVTGATAYNLPNNLKQIYDKHKGKCSKVLAKGFTNGDASQGKSFSYCGDIPGAIFISSSKGYTNMDIDCDGANNSAGKCANDPSGQGETAFKSDVKKFGISDLDANIHPYVVFGNEDHSPKFKPQSHGMQPLSVMAVVCNGQLHYGIWGDTNGGVSTGEASISLADLCFPNEHLDGNHGHDPNDVLFIGFTSKDAVPGATAKWKAKNAKEFEDSIKSIGDKLVAGLKA</sequence>
<feature type="signal peptide" evidence="2 4">
    <location>
        <begin position="1"/>
        <end position="17"/>
    </location>
</feature>
<feature type="chain" id="PRO_5000089367" description="Endo-chitosanase">
    <location>
        <begin position="18"/>
        <end position="238"/>
    </location>
</feature>
<feature type="glycosylation site" description="N-linked (GlcNAc...) asparagine" evidence="1">
    <location>
        <position position="83"/>
    </location>
</feature>
<feature type="sequence variant" description="In strain: NCPF7367." evidence="4">
    <original>V</original>
    <variation>I</variation>
    <location>
        <position position="38"/>
    </location>
</feature>
<feature type="sequence variant" description="In strain: NCPF7367." evidence="4">
    <original>W</original>
    <variation>R</variation>
    <location>
        <position position="213"/>
    </location>
</feature>
<feature type="mutagenesis site" description="Reduces catalytic to less then 0.1 percent." evidence="3">
    <original>D</original>
    <variation>N</variation>
    <location>
        <position position="160"/>
    </location>
</feature>
<feature type="mutagenesis site" description="Reduces catalytic to less then 0.1 percent." evidence="3">
    <original>E</original>
    <variation>Q</variation>
    <location>
        <position position="169"/>
    </location>
</feature>